<proteinExistence type="inferred from homology"/>
<accession>Q88NT5</accession>
<name>Y1119_PSEPK</name>
<comment type="similarity">
    <text evidence="1">Belongs to the UPF0225 family.</text>
</comment>
<keyword id="KW-1185">Reference proteome</keyword>
<feature type="chain" id="PRO_0000071810" description="UPF0225 protein PP_1119">
    <location>
        <begin position="1"/>
        <end position="160"/>
    </location>
</feature>
<gene>
    <name type="ordered locus">PP_1119</name>
</gene>
<reference key="1">
    <citation type="journal article" date="2002" name="Environ. Microbiol.">
        <title>Complete genome sequence and comparative analysis of the metabolically versatile Pseudomonas putida KT2440.</title>
        <authorList>
            <person name="Nelson K.E."/>
            <person name="Weinel C."/>
            <person name="Paulsen I.T."/>
            <person name="Dodson R.J."/>
            <person name="Hilbert H."/>
            <person name="Martins dos Santos V.A.P."/>
            <person name="Fouts D.E."/>
            <person name="Gill S.R."/>
            <person name="Pop M."/>
            <person name="Holmes M."/>
            <person name="Brinkac L.M."/>
            <person name="Beanan M.J."/>
            <person name="DeBoy R.T."/>
            <person name="Daugherty S.C."/>
            <person name="Kolonay J.F."/>
            <person name="Madupu R."/>
            <person name="Nelson W.C."/>
            <person name="White O."/>
            <person name="Peterson J.D."/>
            <person name="Khouri H.M."/>
            <person name="Hance I."/>
            <person name="Chris Lee P."/>
            <person name="Holtzapple E.K."/>
            <person name="Scanlan D."/>
            <person name="Tran K."/>
            <person name="Moazzez A."/>
            <person name="Utterback T.R."/>
            <person name="Rizzo M."/>
            <person name="Lee K."/>
            <person name="Kosack D."/>
            <person name="Moestl D."/>
            <person name="Wedler H."/>
            <person name="Lauber J."/>
            <person name="Stjepandic D."/>
            <person name="Hoheisel J."/>
            <person name="Straetz M."/>
            <person name="Heim S."/>
            <person name="Kiewitz C."/>
            <person name="Eisen J.A."/>
            <person name="Timmis K.N."/>
            <person name="Duesterhoeft A."/>
            <person name="Tuemmler B."/>
            <person name="Fraser C.M."/>
        </authorList>
    </citation>
    <scope>NUCLEOTIDE SEQUENCE [LARGE SCALE GENOMIC DNA]</scope>
    <source>
        <strain>ATCC 47054 / DSM 6125 / CFBP 8728 / NCIMB 11950 / KT2440</strain>
    </source>
</reference>
<dbReference type="EMBL" id="AE015451">
    <property type="protein sequence ID" value="AAN66744.1"/>
    <property type="molecule type" value="Genomic_DNA"/>
</dbReference>
<dbReference type="RefSeq" id="NP_743280.1">
    <property type="nucleotide sequence ID" value="NC_002947.4"/>
</dbReference>
<dbReference type="SMR" id="Q88NT5"/>
<dbReference type="STRING" id="160488.PP_1119"/>
<dbReference type="PaxDb" id="160488-PP_1119"/>
<dbReference type="KEGG" id="ppu:PP_1119"/>
<dbReference type="PATRIC" id="fig|160488.4.peg.1187"/>
<dbReference type="eggNOG" id="COG3012">
    <property type="taxonomic scope" value="Bacteria"/>
</dbReference>
<dbReference type="HOGENOM" id="CLU_099590_0_1_6"/>
<dbReference type="OrthoDB" id="21421at2"/>
<dbReference type="PhylomeDB" id="Q88NT5"/>
<dbReference type="BioCyc" id="PPUT160488:G1G01-1197-MONOMER"/>
<dbReference type="Proteomes" id="UP000000556">
    <property type="component" value="Chromosome"/>
</dbReference>
<dbReference type="Gene3D" id="3.10.450.50">
    <property type="match status" value="1"/>
</dbReference>
<dbReference type="HAMAP" id="MF_00612">
    <property type="entry name" value="UPF0225"/>
    <property type="match status" value="1"/>
</dbReference>
<dbReference type="InterPro" id="IPR032710">
    <property type="entry name" value="NTF2-like_dom_sf"/>
</dbReference>
<dbReference type="InterPro" id="IPR004027">
    <property type="entry name" value="SEC_C_motif"/>
</dbReference>
<dbReference type="InterPro" id="IPR023006">
    <property type="entry name" value="UPF0225"/>
</dbReference>
<dbReference type="InterPro" id="IPR048469">
    <property type="entry name" value="YchJ-like_M"/>
</dbReference>
<dbReference type="NCBIfam" id="NF001213">
    <property type="entry name" value="PRK00183.1"/>
    <property type="match status" value="1"/>
</dbReference>
<dbReference type="NCBIfam" id="NF002449">
    <property type="entry name" value="PRK01617.1"/>
    <property type="match status" value="1"/>
</dbReference>
<dbReference type="NCBIfam" id="NF002486">
    <property type="entry name" value="PRK01752.1"/>
    <property type="match status" value="1"/>
</dbReference>
<dbReference type="PANTHER" id="PTHR33747:SF1">
    <property type="entry name" value="ADENYLATE CYCLASE-ASSOCIATED CAP C-TERMINAL DOMAIN-CONTAINING PROTEIN"/>
    <property type="match status" value="1"/>
</dbReference>
<dbReference type="PANTHER" id="PTHR33747">
    <property type="entry name" value="UPF0225 PROTEIN SCO1677"/>
    <property type="match status" value="1"/>
</dbReference>
<dbReference type="Pfam" id="PF02810">
    <property type="entry name" value="SEC-C"/>
    <property type="match status" value="1"/>
</dbReference>
<dbReference type="Pfam" id="PF17775">
    <property type="entry name" value="YchJ_M-like"/>
    <property type="match status" value="1"/>
</dbReference>
<dbReference type="SUPFAM" id="SSF54427">
    <property type="entry name" value="NTF2-like"/>
    <property type="match status" value="1"/>
</dbReference>
<dbReference type="SUPFAM" id="SSF103642">
    <property type="entry name" value="Sec-C motif"/>
    <property type="match status" value="1"/>
</dbReference>
<organism>
    <name type="scientific">Pseudomonas putida (strain ATCC 47054 / DSM 6125 / CFBP 8728 / NCIMB 11950 / KT2440)</name>
    <dbReference type="NCBI Taxonomy" id="160488"/>
    <lineage>
        <taxon>Bacteria</taxon>
        <taxon>Pseudomonadati</taxon>
        <taxon>Pseudomonadota</taxon>
        <taxon>Gammaproteobacteria</taxon>
        <taxon>Pseudomonadales</taxon>
        <taxon>Pseudomonadaceae</taxon>
        <taxon>Pseudomonas</taxon>
    </lineage>
</organism>
<protein>
    <recommendedName>
        <fullName evidence="1">UPF0225 protein PP_1119</fullName>
    </recommendedName>
</protein>
<evidence type="ECO:0000255" key="1">
    <source>
        <dbReference type="HAMAP-Rule" id="MF_00612"/>
    </source>
</evidence>
<sequence length="160" mass="17415">MMSVSVCPCGSGNLLDACCGHYHAGTPAPDAQALMRSRYSAYVLGLVDYLVATTLPAQQAGLDRAAMADWSAQSTWLGLEVESAEVLGGQPEHSFVTFTARWHDQDGDHQHRERSAFVQHAGRWYFIDPTVGLKAGRNDPCPCASGHKFKKCCNNYLPKG</sequence>